<gene>
    <name evidence="1" type="primary">proA</name>
    <name type="ordered locus">TT_C1564</name>
</gene>
<keyword id="KW-0028">Amino-acid biosynthesis</keyword>
<keyword id="KW-0963">Cytoplasm</keyword>
<keyword id="KW-0521">NADP</keyword>
<keyword id="KW-0560">Oxidoreductase</keyword>
<keyword id="KW-0641">Proline biosynthesis</keyword>
<reference key="1">
    <citation type="journal article" date="1994" name="FEMS Microbiol. Lett.">
        <title>Molecular cloning and sequence analysis of the proBA operon from an extremely thermophilic eubacterium Thermus thermophilus.</title>
        <authorList>
            <person name="Kosuge T."/>
            <person name="Tabata K."/>
            <person name="Hoshino T."/>
        </authorList>
    </citation>
    <scope>NUCLEOTIDE SEQUENCE [GENOMIC DNA]</scope>
</reference>
<reference key="2">
    <citation type="journal article" date="2004" name="Nat. Biotechnol.">
        <title>The genome sequence of the extreme thermophile Thermus thermophilus.</title>
        <authorList>
            <person name="Henne A."/>
            <person name="Brueggemann H."/>
            <person name="Raasch C."/>
            <person name="Wiezer A."/>
            <person name="Hartsch T."/>
            <person name="Liesegang H."/>
            <person name="Johann A."/>
            <person name="Lienard T."/>
            <person name="Gohl O."/>
            <person name="Martinez-Arias R."/>
            <person name="Jacobi C."/>
            <person name="Starkuviene V."/>
            <person name="Schlenczeck S."/>
            <person name="Dencker S."/>
            <person name="Huber R."/>
            <person name="Klenk H.-P."/>
            <person name="Kramer W."/>
            <person name="Merkl R."/>
            <person name="Gottschalk G."/>
            <person name="Fritz H.-J."/>
        </authorList>
    </citation>
    <scope>NUCLEOTIDE SEQUENCE [LARGE SCALE GENOMIC DNA]</scope>
    <source>
        <strain>ATCC BAA-163 / DSM 7039 / HB27</strain>
    </source>
</reference>
<feature type="chain" id="PRO_0000189803" description="Gamma-glutamyl phosphate reductase">
    <location>
        <begin position="1"/>
        <end position="413"/>
    </location>
</feature>
<protein>
    <recommendedName>
        <fullName evidence="1">Gamma-glutamyl phosphate reductase</fullName>
        <shortName evidence="1">GPR</shortName>
        <ecNumber evidence="1">1.2.1.41</ecNumber>
    </recommendedName>
    <alternativeName>
        <fullName evidence="1">Glutamate-5-semialdehyde dehydrogenase</fullName>
    </alternativeName>
    <alternativeName>
        <fullName evidence="1">Glutamyl-gamma-semialdehyde dehydrogenase</fullName>
        <shortName evidence="1">GSA dehydrogenase</shortName>
    </alternativeName>
</protein>
<evidence type="ECO:0000255" key="1">
    <source>
        <dbReference type="HAMAP-Rule" id="MF_00412"/>
    </source>
</evidence>
<evidence type="ECO:0000305" key="2"/>
<sequence length="413" mass="45851">MTATSLWELAERARKRLSEIAKGNRDRALLAMADLLEARWEEVLRANREDLEEAERTGLPKAKLDRLALKEKDLKTLTEGLRQIARLPDPLGRIEGLAKRPNGLRVGRMRVPLGLIGFIYEARPGATVEAVSVALKAGNAMLLRGGKEAFRSNRALVALWHEALEEAGLPEEAVTLVPTTDREAVLEMCRLELLDLLIPRGGEELIRLVQQEARVPVLAHAKGVNHLYVDEKADLSMALRLALNGKTQRPAVCNALEAVLVHEKVAEAFLPRLEKAMREKGVELRACPRALPLLKEAVPAREDEWDREYLDLVLRVKVVSGLEEALAHIARYGSRHTEAICTEDPKAAWRFLEEVDASLVLWNASTRFNDGFELGLGAEIGISTSKLHAYGPMGPLELTTLKWVALGEGQERT</sequence>
<proteinExistence type="inferred from homology"/>
<dbReference type="EC" id="1.2.1.41" evidence="1"/>
<dbReference type="EMBL" id="D29973">
    <property type="protein sequence ID" value="BAA06238.1"/>
    <property type="status" value="ALT_FRAME"/>
    <property type="molecule type" value="Genomic_DNA"/>
</dbReference>
<dbReference type="EMBL" id="AE017221">
    <property type="protein sequence ID" value="AAS81906.1"/>
    <property type="molecule type" value="Genomic_DNA"/>
</dbReference>
<dbReference type="RefSeq" id="WP_011173936.1">
    <property type="nucleotide sequence ID" value="NC_005835.1"/>
</dbReference>
<dbReference type="SMR" id="P54903"/>
<dbReference type="KEGG" id="tth:TT_C1564"/>
<dbReference type="eggNOG" id="COG0014">
    <property type="taxonomic scope" value="Bacteria"/>
</dbReference>
<dbReference type="HOGENOM" id="CLU_030231_0_0_0"/>
<dbReference type="OrthoDB" id="9809970at2"/>
<dbReference type="UniPathway" id="UPA00098">
    <property type="reaction ID" value="UER00360"/>
</dbReference>
<dbReference type="Proteomes" id="UP000000592">
    <property type="component" value="Chromosome"/>
</dbReference>
<dbReference type="GO" id="GO:0005737">
    <property type="term" value="C:cytoplasm"/>
    <property type="evidence" value="ECO:0007669"/>
    <property type="project" value="UniProtKB-SubCell"/>
</dbReference>
<dbReference type="GO" id="GO:0004350">
    <property type="term" value="F:glutamate-5-semialdehyde dehydrogenase activity"/>
    <property type="evidence" value="ECO:0007669"/>
    <property type="project" value="UniProtKB-UniRule"/>
</dbReference>
<dbReference type="GO" id="GO:0050661">
    <property type="term" value="F:NADP binding"/>
    <property type="evidence" value="ECO:0007669"/>
    <property type="project" value="InterPro"/>
</dbReference>
<dbReference type="GO" id="GO:0055129">
    <property type="term" value="P:L-proline biosynthetic process"/>
    <property type="evidence" value="ECO:0007669"/>
    <property type="project" value="UniProtKB-UniRule"/>
</dbReference>
<dbReference type="CDD" id="cd07079">
    <property type="entry name" value="ALDH_F18-19_ProA-GPR"/>
    <property type="match status" value="1"/>
</dbReference>
<dbReference type="FunFam" id="3.40.309.10:FF:000006">
    <property type="entry name" value="Gamma-glutamyl phosphate reductase"/>
    <property type="match status" value="1"/>
</dbReference>
<dbReference type="Gene3D" id="3.40.605.10">
    <property type="entry name" value="Aldehyde Dehydrogenase, Chain A, domain 1"/>
    <property type="match status" value="1"/>
</dbReference>
<dbReference type="Gene3D" id="3.40.309.10">
    <property type="entry name" value="Aldehyde Dehydrogenase, Chain A, domain 2"/>
    <property type="match status" value="1"/>
</dbReference>
<dbReference type="HAMAP" id="MF_00412">
    <property type="entry name" value="ProA"/>
    <property type="match status" value="1"/>
</dbReference>
<dbReference type="InterPro" id="IPR016161">
    <property type="entry name" value="Ald_DH/histidinol_DH"/>
</dbReference>
<dbReference type="InterPro" id="IPR016163">
    <property type="entry name" value="Ald_DH_C"/>
</dbReference>
<dbReference type="InterPro" id="IPR016162">
    <property type="entry name" value="Ald_DH_N"/>
</dbReference>
<dbReference type="InterPro" id="IPR015590">
    <property type="entry name" value="Aldehyde_DH_dom"/>
</dbReference>
<dbReference type="InterPro" id="IPR020593">
    <property type="entry name" value="G-glutamylP_reductase_CS"/>
</dbReference>
<dbReference type="InterPro" id="IPR012134">
    <property type="entry name" value="Glu-5-SA_DH"/>
</dbReference>
<dbReference type="InterPro" id="IPR000965">
    <property type="entry name" value="GPR_dom"/>
</dbReference>
<dbReference type="NCBIfam" id="NF001221">
    <property type="entry name" value="PRK00197.1"/>
    <property type="match status" value="1"/>
</dbReference>
<dbReference type="NCBIfam" id="TIGR00407">
    <property type="entry name" value="proA"/>
    <property type="match status" value="1"/>
</dbReference>
<dbReference type="PANTHER" id="PTHR11063:SF8">
    <property type="entry name" value="DELTA-1-PYRROLINE-5-CARBOXYLATE SYNTHASE"/>
    <property type="match status" value="1"/>
</dbReference>
<dbReference type="PANTHER" id="PTHR11063">
    <property type="entry name" value="GLUTAMATE SEMIALDEHYDE DEHYDROGENASE"/>
    <property type="match status" value="1"/>
</dbReference>
<dbReference type="Pfam" id="PF00171">
    <property type="entry name" value="Aldedh"/>
    <property type="match status" value="1"/>
</dbReference>
<dbReference type="PIRSF" id="PIRSF000151">
    <property type="entry name" value="GPR"/>
    <property type="match status" value="1"/>
</dbReference>
<dbReference type="SUPFAM" id="SSF53720">
    <property type="entry name" value="ALDH-like"/>
    <property type="match status" value="1"/>
</dbReference>
<dbReference type="PROSITE" id="PS01223">
    <property type="entry name" value="PROA"/>
    <property type="match status" value="1"/>
</dbReference>
<accession>P54903</accession>
<comment type="function">
    <text evidence="1">Catalyzes the NADPH-dependent reduction of L-glutamate 5-phosphate into L-glutamate 5-semialdehyde and phosphate. The product spontaneously undergoes cyclization to form 1-pyrroline-5-carboxylate.</text>
</comment>
<comment type="catalytic activity">
    <reaction evidence="1">
        <text>L-glutamate 5-semialdehyde + phosphate + NADP(+) = L-glutamyl 5-phosphate + NADPH + H(+)</text>
        <dbReference type="Rhea" id="RHEA:19541"/>
        <dbReference type="ChEBI" id="CHEBI:15378"/>
        <dbReference type="ChEBI" id="CHEBI:43474"/>
        <dbReference type="ChEBI" id="CHEBI:57783"/>
        <dbReference type="ChEBI" id="CHEBI:58066"/>
        <dbReference type="ChEBI" id="CHEBI:58274"/>
        <dbReference type="ChEBI" id="CHEBI:58349"/>
        <dbReference type="EC" id="1.2.1.41"/>
    </reaction>
</comment>
<comment type="pathway">
    <text evidence="1">Amino-acid biosynthesis; L-proline biosynthesis; L-glutamate 5-semialdehyde from L-glutamate: step 2/2.</text>
</comment>
<comment type="subcellular location">
    <subcellularLocation>
        <location evidence="1">Cytoplasm</location>
    </subcellularLocation>
</comment>
<comment type="similarity">
    <text evidence="1">Belongs to the gamma-glutamyl phosphate reductase family.</text>
</comment>
<comment type="sequence caution" evidence="2">
    <conflict type="frameshift">
        <sequence resource="EMBL-CDS" id="BAA06238"/>
    </conflict>
</comment>
<organism>
    <name type="scientific">Thermus thermophilus (strain ATCC BAA-163 / DSM 7039 / HB27)</name>
    <dbReference type="NCBI Taxonomy" id="262724"/>
    <lineage>
        <taxon>Bacteria</taxon>
        <taxon>Thermotogati</taxon>
        <taxon>Deinococcota</taxon>
        <taxon>Deinococci</taxon>
        <taxon>Thermales</taxon>
        <taxon>Thermaceae</taxon>
        <taxon>Thermus</taxon>
    </lineage>
</organism>
<name>PROA_THET2</name>